<gene>
    <name evidence="7" type="primary">bioF</name>
    <name type="ordered locus">b0776</name>
    <name type="ordered locus">JW0759</name>
</gene>
<name>BIOF_ECOLI</name>
<protein>
    <recommendedName>
        <fullName evidence="6">8-amino-7-oxononanoate synthase</fullName>
        <shortName evidence="6">AONS</shortName>
        <ecNumber evidence="1 3">2.3.1.47</ecNumber>
    </recommendedName>
    <alternativeName>
        <fullName evidence="7">7-keto-8-amino-pelargonic acid synthase</fullName>
        <shortName evidence="7">7-KAP synthase</shortName>
        <shortName evidence="7">KAPA synthase</shortName>
    </alternativeName>
    <alternativeName>
        <fullName>8-amino-7-ketopelargonate synthase</fullName>
    </alternativeName>
</protein>
<feature type="initiator methionine" description="Removed" evidence="1">
    <location>
        <position position="1"/>
    </location>
</feature>
<feature type="chain" id="PRO_0000163811" description="8-amino-7-oxononanoate synthase">
    <location>
        <begin position="2"/>
        <end position="384"/>
    </location>
</feature>
<feature type="binding site" evidence="1">
    <location>
        <position position="21"/>
    </location>
    <ligand>
        <name>substrate</name>
    </ligand>
</feature>
<feature type="binding site" evidence="1 2">
    <location>
        <begin position="108"/>
        <end position="109"/>
    </location>
    <ligand>
        <name>pyridoxal 5'-phosphate</name>
        <dbReference type="ChEBI" id="CHEBI:597326"/>
    </ligand>
</feature>
<feature type="binding site" evidence="1">
    <location>
        <position position="133"/>
    </location>
    <ligand>
        <name>substrate</name>
    </ligand>
</feature>
<feature type="binding site" evidence="1 2">
    <location>
        <position position="179"/>
    </location>
    <ligand>
        <name>pyridoxal 5'-phosphate</name>
        <dbReference type="ChEBI" id="CHEBI:597326"/>
    </ligand>
</feature>
<feature type="binding site" evidence="1 2">
    <location>
        <position position="207"/>
    </location>
    <ligand>
        <name>pyridoxal 5'-phosphate</name>
        <dbReference type="ChEBI" id="CHEBI:597326"/>
    </ligand>
</feature>
<feature type="binding site" evidence="1">
    <location>
        <position position="233"/>
    </location>
    <ligand>
        <name>pyridoxal 5'-phosphate</name>
        <dbReference type="ChEBI" id="CHEBI:597326"/>
    </ligand>
</feature>
<feature type="binding site" evidence="1">
    <location>
        <position position="352"/>
    </location>
    <ligand>
        <name>substrate</name>
    </ligand>
</feature>
<feature type="modified residue" description="N6-(pyridoxal phosphate)lysine" evidence="1 2">
    <location>
        <position position="236"/>
    </location>
</feature>
<feature type="sequence conflict" description="In Ref. 2; CAA00968." evidence="8" ref="2">
    <original>AE</original>
    <variation>R</variation>
    <location>
        <begin position="188"/>
        <end position="189"/>
    </location>
</feature>
<feature type="helix" evidence="10">
    <location>
        <begin position="3"/>
        <end position="13"/>
    </location>
</feature>
<feature type="helix" evidence="10">
    <location>
        <begin position="16"/>
        <end position="18"/>
    </location>
</feature>
<feature type="strand" evidence="10">
    <location>
        <begin position="30"/>
        <end position="36"/>
    </location>
</feature>
<feature type="strand" evidence="10">
    <location>
        <begin position="39"/>
        <end position="43"/>
    </location>
</feature>
<feature type="helix" evidence="10">
    <location>
        <begin position="52"/>
        <end position="54"/>
    </location>
</feature>
<feature type="helix" evidence="10">
    <location>
        <begin position="56"/>
        <end position="69"/>
    </location>
</feature>
<feature type="turn" evidence="10">
    <location>
        <begin position="77"/>
        <end position="80"/>
    </location>
</feature>
<feature type="helix" evidence="10">
    <location>
        <begin position="84"/>
        <end position="97"/>
    </location>
</feature>
<feature type="strand" evidence="10">
    <location>
        <begin position="100"/>
        <end position="106"/>
    </location>
</feature>
<feature type="helix" evidence="10">
    <location>
        <begin position="108"/>
        <end position="119"/>
    </location>
</feature>
<feature type="strand" evidence="10">
    <location>
        <begin position="125"/>
        <end position="129"/>
    </location>
</feature>
<feature type="helix" evidence="10">
    <location>
        <begin position="134"/>
        <end position="141"/>
    </location>
</feature>
<feature type="strand" evidence="10">
    <location>
        <begin position="143"/>
        <end position="150"/>
    </location>
</feature>
<feature type="helix" evidence="10">
    <location>
        <begin position="155"/>
        <end position="163"/>
    </location>
</feature>
<feature type="strand" evidence="10">
    <location>
        <begin position="170"/>
        <end position="177"/>
    </location>
</feature>
<feature type="turn" evidence="10">
    <location>
        <begin position="179"/>
        <end position="181"/>
    </location>
</feature>
<feature type="helix" evidence="10">
    <location>
        <begin position="187"/>
        <end position="196"/>
    </location>
</feature>
<feature type="strand" evidence="10">
    <location>
        <begin position="200"/>
        <end position="204"/>
    </location>
</feature>
<feature type="turn" evidence="10">
    <location>
        <begin position="206"/>
        <end position="211"/>
    </location>
</feature>
<feature type="helix" evidence="10">
    <location>
        <begin position="214"/>
        <end position="216"/>
    </location>
</feature>
<feature type="helix" evidence="10">
    <location>
        <begin position="219"/>
        <end position="222"/>
    </location>
</feature>
<feature type="strand" evidence="10">
    <location>
        <begin position="228"/>
        <end position="236"/>
    </location>
</feature>
<feature type="strand" evidence="10">
    <location>
        <begin position="243"/>
        <end position="247"/>
    </location>
</feature>
<feature type="helix" evidence="10">
    <location>
        <begin position="249"/>
        <end position="258"/>
    </location>
</feature>
<feature type="helix" evidence="10">
    <location>
        <begin position="260"/>
        <end position="263"/>
    </location>
</feature>
<feature type="strand" evidence="10">
    <location>
        <begin position="264"/>
        <end position="266"/>
    </location>
</feature>
<feature type="helix" evidence="10">
    <location>
        <begin position="270"/>
        <end position="284"/>
    </location>
</feature>
<feature type="helix" evidence="10">
    <location>
        <begin position="286"/>
        <end position="306"/>
    </location>
</feature>
<feature type="strand" evidence="11">
    <location>
        <begin position="309"/>
        <end position="311"/>
    </location>
</feature>
<feature type="strand" evidence="10">
    <location>
        <begin position="318"/>
        <end position="320"/>
    </location>
</feature>
<feature type="strand" evidence="10">
    <location>
        <begin position="323"/>
        <end position="327"/>
    </location>
</feature>
<feature type="helix" evidence="10">
    <location>
        <begin position="328"/>
        <end position="340"/>
    </location>
</feature>
<feature type="strand" evidence="13">
    <location>
        <begin position="346"/>
        <end position="348"/>
    </location>
</feature>
<feature type="turn" evidence="12">
    <location>
        <begin position="350"/>
        <end position="352"/>
    </location>
</feature>
<feature type="strand" evidence="10">
    <location>
        <begin position="358"/>
        <end position="360"/>
    </location>
</feature>
<feature type="helix" evidence="10">
    <location>
        <begin position="370"/>
        <end position="383"/>
    </location>
</feature>
<evidence type="ECO:0000269" key="1">
    <source>
    </source>
</evidence>
<evidence type="ECO:0000269" key="2">
    <source>
    </source>
</evidence>
<evidence type="ECO:0000269" key="3">
    <source>
    </source>
</evidence>
<evidence type="ECO:0000269" key="4">
    <source>
    </source>
</evidence>
<evidence type="ECO:0000269" key="5">
    <source>
    </source>
</evidence>
<evidence type="ECO:0000303" key="6">
    <source>
    </source>
</evidence>
<evidence type="ECO:0000303" key="7">
    <source>
    </source>
</evidence>
<evidence type="ECO:0000305" key="8"/>
<evidence type="ECO:0000305" key="9">
    <source>
    </source>
</evidence>
<evidence type="ECO:0007829" key="10">
    <source>
        <dbReference type="PDB" id="1BS0"/>
    </source>
</evidence>
<evidence type="ECO:0007829" key="11">
    <source>
        <dbReference type="PDB" id="1DJ9"/>
    </source>
</evidence>
<evidence type="ECO:0007829" key="12">
    <source>
        <dbReference type="PDB" id="1DJE"/>
    </source>
</evidence>
<evidence type="ECO:0007829" key="13">
    <source>
        <dbReference type="PDB" id="8DLE"/>
    </source>
</evidence>
<sequence>MSWQEKINAALDARRAADALRRRYPVAQGAGRWLVADDRQYLNFSSNDYLGLSHHPQIIRAWQQGAEQFGIGSGGSGHVSGYSVVHQALEEELAEWLGYSRALLFISGFAANQAVIAAMMAKEDRIAADRLSHASLLEAASLSPSQLRRFAHNDVTHLARLLASPCPGQQMVVTEGVFSMDGDSAPLAEIQQVTQQHNGWLMVDDAHGTGVIGEQGRGSCWLQKVKPELLVVTFGKGFGVSGAAVLCSSTVADYLLQFARHLIYSTSMPPAQAQALRASLAVIRSDEGDARREKLAALITRFRAGVQDLPFTLADSCSAIQPLIVGDNSRALQLAEKLRQQGCWVTAIRPPTVPAGTARLRLTLTAAHEMQDIDRLLEVLHGNG</sequence>
<accession>P12998</accession>
<accession>Q2MBJ3</accession>
<organism>
    <name type="scientific">Escherichia coli (strain K12)</name>
    <dbReference type="NCBI Taxonomy" id="83333"/>
    <lineage>
        <taxon>Bacteria</taxon>
        <taxon>Pseudomonadati</taxon>
        <taxon>Pseudomonadota</taxon>
        <taxon>Gammaproteobacteria</taxon>
        <taxon>Enterobacterales</taxon>
        <taxon>Enterobacteriaceae</taxon>
        <taxon>Escherichia</taxon>
    </lineage>
</organism>
<keyword id="KW-0002">3D-structure</keyword>
<keyword id="KW-0093">Biotin biosynthesis</keyword>
<keyword id="KW-0903">Direct protein sequencing</keyword>
<keyword id="KW-0663">Pyridoxal phosphate</keyword>
<keyword id="KW-1185">Reference proteome</keyword>
<keyword id="KW-0808">Transferase</keyword>
<reference key="1">
    <citation type="journal article" date="1988" name="J. Biol. Chem.">
        <title>The Escherichia coli biotin biosynthetic enzyme sequences predicted from the nucleotide sequence of the bio operon.</title>
        <authorList>
            <person name="Otsuka A.J."/>
            <person name="Buoncristiani M.R."/>
            <person name="Howard P.K."/>
            <person name="Flamm J."/>
            <person name="Johnson O."/>
            <person name="Yamamoto R."/>
            <person name="Uchida K."/>
            <person name="Cook C."/>
            <person name="Ruppert J."/>
            <person name="Matsuzaki J."/>
        </authorList>
    </citation>
    <scope>NUCLEOTIDE SEQUENCE [GENOMIC DNA]</scope>
    <scope>PATHWAY</scope>
</reference>
<reference key="2">
    <citation type="patent" date="1989-10-11" number="GB2216530">
        <title>Genetic material for expression of biotin synthetase enzymes.</title>
        <authorList>
            <person name="Pearson B.M."/>
            <person name="McKee R.A."/>
        </authorList>
    </citation>
    <scope>NUCLEOTIDE SEQUENCE [GENOMIC DNA]</scope>
</reference>
<reference key="3">
    <citation type="journal article" date="1997" name="Science">
        <title>The complete genome sequence of Escherichia coli K-12.</title>
        <authorList>
            <person name="Blattner F.R."/>
            <person name="Plunkett G. III"/>
            <person name="Bloch C.A."/>
            <person name="Perna N.T."/>
            <person name="Burland V."/>
            <person name="Riley M."/>
            <person name="Collado-Vides J."/>
            <person name="Glasner J.D."/>
            <person name="Rode C.K."/>
            <person name="Mayhew G.F."/>
            <person name="Gregor J."/>
            <person name="Davis N.W."/>
            <person name="Kirkpatrick H.A."/>
            <person name="Goeden M.A."/>
            <person name="Rose D.J."/>
            <person name="Mau B."/>
            <person name="Shao Y."/>
        </authorList>
    </citation>
    <scope>NUCLEOTIDE SEQUENCE [LARGE SCALE GENOMIC DNA]</scope>
    <source>
        <strain>K12 / MG1655 / ATCC 47076</strain>
    </source>
</reference>
<reference key="4">
    <citation type="journal article" date="2006" name="Mol. Syst. Biol.">
        <title>Highly accurate genome sequences of Escherichia coli K-12 strains MG1655 and W3110.</title>
        <authorList>
            <person name="Hayashi K."/>
            <person name="Morooka N."/>
            <person name="Yamamoto Y."/>
            <person name="Fujita K."/>
            <person name="Isono K."/>
            <person name="Choi S."/>
            <person name="Ohtsubo E."/>
            <person name="Baba T."/>
            <person name="Wanner B.L."/>
            <person name="Mori H."/>
            <person name="Horiuchi T."/>
        </authorList>
    </citation>
    <scope>NUCLEOTIDE SEQUENCE [LARGE SCALE GENOMIC DNA]</scope>
    <source>
        <strain>K12 / W3110 / ATCC 27325 / DSM 5911</strain>
    </source>
</reference>
<reference key="5">
    <citation type="journal article" date="2000" name="Biochemistry">
        <title>Mechanism of 8-amino-7-oxononanoate synthase: spectroscopic, kinetic, and crystallographic studies.</title>
        <authorList>
            <person name="Webster S.P."/>
            <person name="Alexeev D."/>
            <person name="Campopiano D.J."/>
            <person name="Watt R.M."/>
            <person name="Alexeeva M."/>
            <person name="Sawyer L."/>
            <person name="Baxter R.L."/>
        </authorList>
    </citation>
    <scope>PROTEIN SEQUENCE OF 2-6</scope>
    <scope>X-RAY CRYSTALLOGRAPHY (2.0 ANGSTROMS) IN COMPLEX WITH PYRIDOXAL PHOSPHATE AND SUBSTRATE</scope>
    <scope>FUNCTION</scope>
    <scope>CATALYTIC ACTIVITY</scope>
    <scope>BIOPHYSICOCHEMICAL PROPERTIES</scope>
    <scope>COFACTOR</scope>
    <scope>MASS SPECTROMETRY</scope>
    <scope>SUBUNIT</scope>
    <scope>REACTION MECHANISM</scope>
</reference>
<reference key="6">
    <citation type="journal article" date="1999" name="Eur. J. Biochem.">
        <title>Slow-binding and competitive inhibition of 8-amino-7-oxopelargonate synthase, a pyridoxal-5'-phosphate-dependent enzyme involved in biotin biosynthesis, by substrate and intermediate analogs. Kinetic and binding studies.</title>
        <authorList>
            <person name="Ploux O."/>
            <person name="Breyne O."/>
            <person name="Carillon S."/>
            <person name="Marquet A."/>
        </authorList>
    </citation>
    <scope>ACTIVITY REGULATION</scope>
</reference>
<reference key="7">
    <citation type="journal article" date="2010" name="Nat. Chem. Biol.">
        <title>Biotin synthesis begins by hijacking the fatty acid synthetic pathway.</title>
        <authorList>
            <person name="Lin S."/>
            <person name="Hanson R.E."/>
            <person name="Cronan J.E."/>
        </authorList>
    </citation>
    <scope>FUNCTION</scope>
    <scope>CATALYTIC ACTIVITY</scope>
    <scope>SUBSTRATE SPECIFICITY</scope>
</reference>
<reference key="8">
    <citation type="journal article" date="1998" name="J. Mol. Biol.">
        <title>The crystal structure of 8-amino-7-oxononanoate synthase: a bacterial PLP-dependent, acyl-CoA-condensing enzyme.</title>
        <authorList>
            <person name="Alexeev D."/>
            <person name="Alexeeva M."/>
            <person name="Baxter R.L."/>
            <person name="Campopiano D.J."/>
            <person name="Webster S.P."/>
            <person name="Sawyer L."/>
        </authorList>
    </citation>
    <scope>X-RAY CRYSTALLOGRAPHY (1.65 ANGSTROMS)</scope>
    <scope>SUBUNIT</scope>
</reference>
<reference key="9">
    <citation type="journal article" date="2006" name="Org. Biomol. Chem.">
        <title>Suicide inhibition of alpha-oxamine synthases: structures of the covalent adducts of 8-amino-7-oxononanoate synthase with trifluoroalanine.</title>
        <authorList>
            <person name="Alexeev D."/>
            <person name="Baxter R.L."/>
            <person name="Campopiano D.J."/>
            <person name="Kerbarh O."/>
            <person name="Sawyer L."/>
            <person name="Tomczyk N."/>
            <person name="Watt R."/>
            <person name="Webster S.P."/>
        </authorList>
    </citation>
    <scope>X-RAY CRYSTALLOGRAPHY (2.14 ANGSTROMS) IN COMPLEX WITH PYRIDOXAL PHOSPHATE ANALOG</scope>
    <scope>SUBUNIT</scope>
</reference>
<dbReference type="EC" id="2.3.1.47" evidence="1 3"/>
<dbReference type="EMBL" id="J04423">
    <property type="protein sequence ID" value="AAA23516.1"/>
    <property type="molecule type" value="Genomic_DNA"/>
</dbReference>
<dbReference type="EMBL" id="A11542">
    <property type="protein sequence ID" value="CAA00968.1"/>
    <property type="molecule type" value="Unassigned_DNA"/>
</dbReference>
<dbReference type="EMBL" id="U00096">
    <property type="protein sequence ID" value="AAC73863.1"/>
    <property type="molecule type" value="Genomic_DNA"/>
</dbReference>
<dbReference type="EMBL" id="AP009048">
    <property type="protein sequence ID" value="BAE76363.1"/>
    <property type="molecule type" value="Genomic_DNA"/>
</dbReference>
<dbReference type="PIR" id="D32025">
    <property type="entry name" value="SYECKP"/>
</dbReference>
<dbReference type="RefSeq" id="NP_415297.1">
    <property type="nucleotide sequence ID" value="NC_000913.3"/>
</dbReference>
<dbReference type="RefSeq" id="WP_000118826.1">
    <property type="nucleotide sequence ID" value="NZ_STEB01000028.1"/>
</dbReference>
<dbReference type="PDB" id="1BS0">
    <property type="method" value="X-ray"/>
    <property type="resolution" value="1.65 A"/>
    <property type="chains" value="A=1-384"/>
</dbReference>
<dbReference type="PDB" id="1DJ9">
    <property type="method" value="X-ray"/>
    <property type="resolution" value="2.00 A"/>
    <property type="chains" value="A=1-384"/>
</dbReference>
<dbReference type="PDB" id="1DJE">
    <property type="method" value="X-ray"/>
    <property type="resolution" value="1.71 A"/>
    <property type="chains" value="A=1-384"/>
</dbReference>
<dbReference type="PDB" id="2G6W">
    <property type="method" value="X-ray"/>
    <property type="resolution" value="2.14 A"/>
    <property type="chains" value="A=1-384"/>
</dbReference>
<dbReference type="PDB" id="8DLE">
    <property type="method" value="X-ray"/>
    <property type="resolution" value="2.30 A"/>
    <property type="chains" value="A=1-384"/>
</dbReference>
<dbReference type="PDBsum" id="1BS0"/>
<dbReference type="PDBsum" id="1DJ9"/>
<dbReference type="PDBsum" id="1DJE"/>
<dbReference type="PDBsum" id="2G6W"/>
<dbReference type="PDBsum" id="8DLE"/>
<dbReference type="SMR" id="P12998"/>
<dbReference type="BioGRID" id="4259953">
    <property type="interactions" value="21"/>
</dbReference>
<dbReference type="DIP" id="DIP-6870N"/>
<dbReference type="FunCoup" id="P12998">
    <property type="interactions" value="274"/>
</dbReference>
<dbReference type="IntAct" id="P12998">
    <property type="interactions" value="2"/>
</dbReference>
<dbReference type="STRING" id="511145.b0776"/>
<dbReference type="DrugBank" id="DB03160">
    <property type="generic name" value="N-Pyridoxyl-7-Keto-8-Aminopelargonic Acid-5'-Monophosphate"/>
</dbReference>
<dbReference type="PaxDb" id="511145-b0776"/>
<dbReference type="EnsemblBacteria" id="AAC73863">
    <property type="protein sequence ID" value="AAC73863"/>
    <property type="gene ID" value="b0776"/>
</dbReference>
<dbReference type="GeneID" id="945384"/>
<dbReference type="KEGG" id="ecj:JW0759"/>
<dbReference type="KEGG" id="eco:b0776"/>
<dbReference type="KEGG" id="ecoc:C3026_04930"/>
<dbReference type="PATRIC" id="fig|1411691.4.peg.1502"/>
<dbReference type="EchoBASE" id="EB0119"/>
<dbReference type="eggNOG" id="COG0156">
    <property type="taxonomic scope" value="Bacteria"/>
</dbReference>
<dbReference type="HOGENOM" id="CLU_015846_11_2_6"/>
<dbReference type="InParanoid" id="P12998"/>
<dbReference type="OMA" id="FSMDGDQ"/>
<dbReference type="OrthoDB" id="9807157at2"/>
<dbReference type="PhylomeDB" id="P12998"/>
<dbReference type="BioCyc" id="EcoCyc:7KAPSYN-MONOMER"/>
<dbReference type="BioCyc" id="MetaCyc:7KAPSYN-MONOMER"/>
<dbReference type="BRENDA" id="2.3.1.47">
    <property type="organism ID" value="2026"/>
</dbReference>
<dbReference type="SABIO-RK" id="P12998"/>
<dbReference type="UniPathway" id="UPA00078"/>
<dbReference type="EvolutionaryTrace" id="P12998"/>
<dbReference type="PRO" id="PR:P12998"/>
<dbReference type="Proteomes" id="UP000000625">
    <property type="component" value="Chromosome"/>
</dbReference>
<dbReference type="GO" id="GO:0008710">
    <property type="term" value="F:8-amino-7-oxononanoate synthase activity"/>
    <property type="evidence" value="ECO:0000314"/>
    <property type="project" value="EcoCyc"/>
</dbReference>
<dbReference type="GO" id="GO:0042803">
    <property type="term" value="F:protein homodimerization activity"/>
    <property type="evidence" value="ECO:0000314"/>
    <property type="project" value="EcoCyc"/>
</dbReference>
<dbReference type="GO" id="GO:0030170">
    <property type="term" value="F:pyridoxal phosphate binding"/>
    <property type="evidence" value="ECO:0000314"/>
    <property type="project" value="UniProtKB"/>
</dbReference>
<dbReference type="GO" id="GO:0009102">
    <property type="term" value="P:biotin biosynthetic process"/>
    <property type="evidence" value="ECO:0000315"/>
    <property type="project" value="EcoCyc"/>
</dbReference>
<dbReference type="CDD" id="cd06454">
    <property type="entry name" value="KBL_like"/>
    <property type="match status" value="1"/>
</dbReference>
<dbReference type="FunFam" id="3.40.640.10:FF:000095">
    <property type="entry name" value="8-amino-7-oxononanoate synthase"/>
    <property type="match status" value="1"/>
</dbReference>
<dbReference type="FunFam" id="3.90.1150.10:FF:000036">
    <property type="entry name" value="8-amino-7-oxononanoate synthase"/>
    <property type="match status" value="1"/>
</dbReference>
<dbReference type="Gene3D" id="3.90.1150.10">
    <property type="entry name" value="Aspartate Aminotransferase, domain 1"/>
    <property type="match status" value="1"/>
</dbReference>
<dbReference type="Gene3D" id="3.40.640.10">
    <property type="entry name" value="Type I PLP-dependent aspartate aminotransferase-like (Major domain)"/>
    <property type="match status" value="1"/>
</dbReference>
<dbReference type="HAMAP" id="MF_01693">
    <property type="entry name" value="BioF_aminotrans_2"/>
    <property type="match status" value="1"/>
</dbReference>
<dbReference type="InterPro" id="IPR001917">
    <property type="entry name" value="Aminotrans_II_pyridoxalP_BS"/>
</dbReference>
<dbReference type="InterPro" id="IPR004839">
    <property type="entry name" value="Aminotransferase_I/II_large"/>
</dbReference>
<dbReference type="InterPro" id="IPR050087">
    <property type="entry name" value="AON_synthase_class-II"/>
</dbReference>
<dbReference type="InterPro" id="IPR004723">
    <property type="entry name" value="AONS_Archaea/Proteobacteria"/>
</dbReference>
<dbReference type="InterPro" id="IPR022834">
    <property type="entry name" value="AONS_Proteobacteria"/>
</dbReference>
<dbReference type="InterPro" id="IPR015424">
    <property type="entry name" value="PyrdxlP-dep_Trfase"/>
</dbReference>
<dbReference type="InterPro" id="IPR015421">
    <property type="entry name" value="PyrdxlP-dep_Trfase_major"/>
</dbReference>
<dbReference type="InterPro" id="IPR015422">
    <property type="entry name" value="PyrdxlP-dep_Trfase_small"/>
</dbReference>
<dbReference type="NCBIfam" id="TIGR00858">
    <property type="entry name" value="bioF"/>
    <property type="match status" value="1"/>
</dbReference>
<dbReference type="PANTHER" id="PTHR13693:SF100">
    <property type="entry name" value="8-AMINO-7-OXONONANOATE SYNTHASE"/>
    <property type="match status" value="1"/>
</dbReference>
<dbReference type="PANTHER" id="PTHR13693">
    <property type="entry name" value="CLASS II AMINOTRANSFERASE/8-AMINO-7-OXONONANOATE SYNTHASE"/>
    <property type="match status" value="1"/>
</dbReference>
<dbReference type="Pfam" id="PF00155">
    <property type="entry name" value="Aminotran_1_2"/>
    <property type="match status" value="1"/>
</dbReference>
<dbReference type="SUPFAM" id="SSF53383">
    <property type="entry name" value="PLP-dependent transferases"/>
    <property type="match status" value="1"/>
</dbReference>
<dbReference type="PROSITE" id="PS00599">
    <property type="entry name" value="AA_TRANSFER_CLASS_2"/>
    <property type="match status" value="1"/>
</dbReference>
<comment type="function">
    <text evidence="1 3">Catalyzes the decarboxylative condensation of pimeloyl-[acyl-carrier protein] and L-alanine to produce 8-amino-7-oxononanoate (AON), [acyl-carrier protein], and carbon dioxide. Can also use pimeloyl-CoA instead of pimeloyl-ACP as substrate, but it is believed that pimeloyl-ACP rather than pimeloyl-CoA is the physiological substrate of BioF.</text>
</comment>
<comment type="catalytic activity">
    <reaction evidence="1 3">
        <text>6-carboxyhexanoyl-[ACP] + L-alanine + H(+) = (8S)-8-amino-7-oxononanoate + holo-[ACP] + CO2</text>
        <dbReference type="Rhea" id="RHEA:42288"/>
        <dbReference type="Rhea" id="RHEA-COMP:9685"/>
        <dbReference type="Rhea" id="RHEA-COMP:9955"/>
        <dbReference type="ChEBI" id="CHEBI:15378"/>
        <dbReference type="ChEBI" id="CHEBI:16526"/>
        <dbReference type="ChEBI" id="CHEBI:57972"/>
        <dbReference type="ChEBI" id="CHEBI:64479"/>
        <dbReference type="ChEBI" id="CHEBI:78846"/>
        <dbReference type="ChEBI" id="CHEBI:149468"/>
        <dbReference type="EC" id="2.3.1.47"/>
    </reaction>
</comment>
<comment type="cofactor">
    <cofactor evidence="1">
        <name>pyridoxal 5'-phosphate</name>
        <dbReference type="ChEBI" id="CHEBI:597326"/>
    </cofactor>
</comment>
<comment type="activity regulation">
    <text evidence="5">Competitively inhibited by D-alanine, 8-amino-7-hydroxy-8-phosphonononanoic acid and 2-amino-3-hydroxy-2-methylnonadioic acid.</text>
</comment>
<comment type="biophysicochemical properties">
    <kinetics>
        <KM evidence="1">25 uM for pimeloyl-CoA (at pH 7.5 and at 30 degrees Celsius)</KM>
        <KM evidence="1">0.5 uM for L-alanine (at pH 7.5 and at 30 degrees Celsius)</KM>
    </kinetics>
</comment>
<comment type="pathway">
    <text evidence="9">Cofactor biosynthesis; biotin biosynthesis.</text>
</comment>
<comment type="subunit">
    <text evidence="1 2 4">Homodimer.</text>
</comment>
<comment type="mass spectrometry"/>
<comment type="similarity">
    <text evidence="8">Belongs to the class-II pyridoxal-phosphate-dependent aminotransferase family. BioF subfamily.</text>
</comment>
<proteinExistence type="evidence at protein level"/>